<evidence type="ECO:0000255" key="1">
    <source>
        <dbReference type="HAMAP-Rule" id="MF_01343"/>
    </source>
</evidence>
<evidence type="ECO:0000305" key="2"/>
<comment type="function">
    <text evidence="1">One of the primary rRNA binding proteins, it binds directly to 16S rRNA where it helps nucleate assembly of the platform of the 30S subunit by binding and bridging several RNA helices of the 16S rRNA.</text>
</comment>
<comment type="function">
    <text evidence="1">Forms an intersubunit bridge (bridge B4) with the 23S rRNA of the 50S subunit in the ribosome.</text>
</comment>
<comment type="subunit">
    <text evidence="1">Part of the 30S ribosomal subunit. Forms a bridge to the 50S subunit in the 70S ribosome, contacting the 23S rRNA.</text>
</comment>
<comment type="similarity">
    <text evidence="1">Belongs to the universal ribosomal protein uS15 family.</text>
</comment>
<sequence length="89" mass="10467">MSLSAIDTKKIILKYGKSEQNSGITEVQVVLLTNQINYLQIHFSQHKKDHCSRRGLLNMVSKRRKLLDYLKKKNISRYSALIEDLHLRR</sequence>
<feature type="chain" id="PRO_0000115402" description="Small ribosomal subunit protein uS15">
    <location>
        <begin position="1"/>
        <end position="89"/>
    </location>
</feature>
<dbReference type="EMBL" id="BA000003">
    <property type="protein sequence ID" value="BAB13078.1"/>
    <property type="molecule type" value="Genomic_DNA"/>
</dbReference>
<dbReference type="RefSeq" id="NP_240192.1">
    <property type="nucleotide sequence ID" value="NC_002528.1"/>
</dbReference>
<dbReference type="RefSeq" id="WP_009874332.1">
    <property type="nucleotide sequence ID" value="NZ_AP036055.1"/>
</dbReference>
<dbReference type="SMR" id="P57455"/>
<dbReference type="STRING" id="563178.BUAP5A_367"/>
<dbReference type="EnsemblBacteria" id="BAB13078">
    <property type="protein sequence ID" value="BAB13078"/>
    <property type="gene ID" value="BAB13078"/>
</dbReference>
<dbReference type="KEGG" id="buc:BU374"/>
<dbReference type="PATRIC" id="fig|107806.10.peg.388"/>
<dbReference type="eggNOG" id="COG0184">
    <property type="taxonomic scope" value="Bacteria"/>
</dbReference>
<dbReference type="HOGENOM" id="CLU_148518_0_0_6"/>
<dbReference type="Proteomes" id="UP000001806">
    <property type="component" value="Chromosome"/>
</dbReference>
<dbReference type="GO" id="GO:0022627">
    <property type="term" value="C:cytosolic small ribosomal subunit"/>
    <property type="evidence" value="ECO:0007669"/>
    <property type="project" value="TreeGrafter"/>
</dbReference>
<dbReference type="GO" id="GO:0019843">
    <property type="term" value="F:rRNA binding"/>
    <property type="evidence" value="ECO:0007669"/>
    <property type="project" value="UniProtKB-UniRule"/>
</dbReference>
<dbReference type="GO" id="GO:0003735">
    <property type="term" value="F:structural constituent of ribosome"/>
    <property type="evidence" value="ECO:0007669"/>
    <property type="project" value="InterPro"/>
</dbReference>
<dbReference type="GO" id="GO:0006412">
    <property type="term" value="P:translation"/>
    <property type="evidence" value="ECO:0007669"/>
    <property type="project" value="UniProtKB-UniRule"/>
</dbReference>
<dbReference type="CDD" id="cd00353">
    <property type="entry name" value="Ribosomal_S15p_S13e"/>
    <property type="match status" value="1"/>
</dbReference>
<dbReference type="Gene3D" id="6.10.250.3130">
    <property type="match status" value="1"/>
</dbReference>
<dbReference type="Gene3D" id="1.10.287.10">
    <property type="entry name" value="S15/NS1, RNA-binding"/>
    <property type="match status" value="1"/>
</dbReference>
<dbReference type="HAMAP" id="MF_01343_B">
    <property type="entry name" value="Ribosomal_uS15_B"/>
    <property type="match status" value="1"/>
</dbReference>
<dbReference type="InterPro" id="IPR000589">
    <property type="entry name" value="Ribosomal_uS15"/>
</dbReference>
<dbReference type="InterPro" id="IPR005290">
    <property type="entry name" value="Ribosomal_uS15_bac-type"/>
</dbReference>
<dbReference type="InterPro" id="IPR009068">
    <property type="entry name" value="uS15_NS1_RNA-bd_sf"/>
</dbReference>
<dbReference type="NCBIfam" id="TIGR00952">
    <property type="entry name" value="S15_bact"/>
    <property type="match status" value="1"/>
</dbReference>
<dbReference type="PANTHER" id="PTHR23321">
    <property type="entry name" value="RIBOSOMAL PROTEIN S15, BACTERIAL AND ORGANELLAR"/>
    <property type="match status" value="1"/>
</dbReference>
<dbReference type="PANTHER" id="PTHR23321:SF26">
    <property type="entry name" value="SMALL RIBOSOMAL SUBUNIT PROTEIN US15M"/>
    <property type="match status" value="1"/>
</dbReference>
<dbReference type="Pfam" id="PF00312">
    <property type="entry name" value="Ribosomal_S15"/>
    <property type="match status" value="1"/>
</dbReference>
<dbReference type="SMART" id="SM01387">
    <property type="entry name" value="Ribosomal_S15"/>
    <property type="match status" value="1"/>
</dbReference>
<dbReference type="SUPFAM" id="SSF47060">
    <property type="entry name" value="S15/NS1 RNA-binding domain"/>
    <property type="match status" value="1"/>
</dbReference>
<dbReference type="PROSITE" id="PS00362">
    <property type="entry name" value="RIBOSOMAL_S15"/>
    <property type="match status" value="1"/>
</dbReference>
<gene>
    <name evidence="1" type="primary">rpsO</name>
    <name type="ordered locus">BU374</name>
</gene>
<keyword id="KW-1185">Reference proteome</keyword>
<keyword id="KW-0687">Ribonucleoprotein</keyword>
<keyword id="KW-0689">Ribosomal protein</keyword>
<keyword id="KW-0694">RNA-binding</keyword>
<keyword id="KW-0699">rRNA-binding</keyword>
<accession>P57455</accession>
<reference key="1">
    <citation type="journal article" date="2000" name="Nature">
        <title>Genome sequence of the endocellular bacterial symbiont of aphids Buchnera sp. APS.</title>
        <authorList>
            <person name="Shigenobu S."/>
            <person name="Watanabe H."/>
            <person name="Hattori M."/>
            <person name="Sakaki Y."/>
            <person name="Ishikawa H."/>
        </authorList>
    </citation>
    <scope>NUCLEOTIDE SEQUENCE [LARGE SCALE GENOMIC DNA]</scope>
    <source>
        <strain>APS</strain>
    </source>
</reference>
<name>RS15_BUCAI</name>
<proteinExistence type="inferred from homology"/>
<organism>
    <name type="scientific">Buchnera aphidicola subsp. Acyrthosiphon pisum (strain APS)</name>
    <name type="common">Acyrthosiphon pisum symbiotic bacterium</name>
    <dbReference type="NCBI Taxonomy" id="107806"/>
    <lineage>
        <taxon>Bacteria</taxon>
        <taxon>Pseudomonadati</taxon>
        <taxon>Pseudomonadota</taxon>
        <taxon>Gammaproteobacteria</taxon>
        <taxon>Enterobacterales</taxon>
        <taxon>Erwiniaceae</taxon>
        <taxon>Buchnera</taxon>
    </lineage>
</organism>
<protein>
    <recommendedName>
        <fullName evidence="1">Small ribosomal subunit protein uS15</fullName>
    </recommendedName>
    <alternativeName>
        <fullName evidence="2">30S ribosomal protein S15</fullName>
    </alternativeName>
</protein>